<gene>
    <name evidence="1" type="primary">xseB</name>
    <name type="ordered locus">HAPS_0673</name>
</gene>
<protein>
    <recommendedName>
        <fullName evidence="1">Exodeoxyribonuclease 7 small subunit</fullName>
        <ecNumber evidence="1">3.1.11.6</ecNumber>
    </recommendedName>
    <alternativeName>
        <fullName evidence="1">Exodeoxyribonuclease VII small subunit</fullName>
        <shortName evidence="1">Exonuclease VII small subunit</shortName>
    </alternativeName>
</protein>
<name>EX7S_GLAP5</name>
<reference key="1">
    <citation type="journal article" date="2009" name="J. Bacteriol.">
        <title>Complete genome sequence of Haemophilus parasuis SH0165.</title>
        <authorList>
            <person name="Yue M."/>
            <person name="Yang F."/>
            <person name="Yang J."/>
            <person name="Bei W."/>
            <person name="Cai X."/>
            <person name="Chen L."/>
            <person name="Dong J."/>
            <person name="Zhou R."/>
            <person name="Jin M."/>
            <person name="Jin Q."/>
            <person name="Chen H."/>
        </authorList>
    </citation>
    <scope>NUCLEOTIDE SEQUENCE [LARGE SCALE GENOMIC DNA]</scope>
    <source>
        <strain>SH0165</strain>
    </source>
</reference>
<keyword id="KW-0963">Cytoplasm</keyword>
<keyword id="KW-0269">Exonuclease</keyword>
<keyword id="KW-0378">Hydrolase</keyword>
<keyword id="KW-0540">Nuclease</keyword>
<keyword id="KW-1185">Reference proteome</keyword>
<dbReference type="EC" id="3.1.11.6" evidence="1"/>
<dbReference type="EMBL" id="CP001321">
    <property type="protein sequence ID" value="ACL32321.1"/>
    <property type="molecule type" value="Genomic_DNA"/>
</dbReference>
<dbReference type="RefSeq" id="WP_005712345.1">
    <property type="nucleotide sequence ID" value="NC_011852.1"/>
</dbReference>
<dbReference type="SMR" id="B8F4R9"/>
<dbReference type="STRING" id="557723.HAPS_0673"/>
<dbReference type="GeneID" id="66619040"/>
<dbReference type="KEGG" id="hap:HAPS_0673"/>
<dbReference type="HOGENOM" id="CLU_145918_3_3_6"/>
<dbReference type="Proteomes" id="UP000006743">
    <property type="component" value="Chromosome"/>
</dbReference>
<dbReference type="GO" id="GO:0005829">
    <property type="term" value="C:cytosol"/>
    <property type="evidence" value="ECO:0007669"/>
    <property type="project" value="TreeGrafter"/>
</dbReference>
<dbReference type="GO" id="GO:0009318">
    <property type="term" value="C:exodeoxyribonuclease VII complex"/>
    <property type="evidence" value="ECO:0007669"/>
    <property type="project" value="InterPro"/>
</dbReference>
<dbReference type="GO" id="GO:0008855">
    <property type="term" value="F:exodeoxyribonuclease VII activity"/>
    <property type="evidence" value="ECO:0007669"/>
    <property type="project" value="UniProtKB-UniRule"/>
</dbReference>
<dbReference type="GO" id="GO:0006308">
    <property type="term" value="P:DNA catabolic process"/>
    <property type="evidence" value="ECO:0007669"/>
    <property type="project" value="UniProtKB-UniRule"/>
</dbReference>
<dbReference type="Gene3D" id="1.10.287.1040">
    <property type="entry name" value="Exonuclease VII, small subunit"/>
    <property type="match status" value="1"/>
</dbReference>
<dbReference type="HAMAP" id="MF_00337">
    <property type="entry name" value="Exonuc_7_S"/>
    <property type="match status" value="1"/>
</dbReference>
<dbReference type="InterPro" id="IPR003761">
    <property type="entry name" value="Exonuc_VII_S"/>
</dbReference>
<dbReference type="InterPro" id="IPR037004">
    <property type="entry name" value="Exonuc_VII_ssu_sf"/>
</dbReference>
<dbReference type="NCBIfam" id="NF002137">
    <property type="entry name" value="PRK00977.1-1"/>
    <property type="match status" value="1"/>
</dbReference>
<dbReference type="NCBIfam" id="NF002140">
    <property type="entry name" value="PRK00977.1-4"/>
    <property type="match status" value="1"/>
</dbReference>
<dbReference type="NCBIfam" id="TIGR01280">
    <property type="entry name" value="xseB"/>
    <property type="match status" value="1"/>
</dbReference>
<dbReference type="PANTHER" id="PTHR34137">
    <property type="entry name" value="EXODEOXYRIBONUCLEASE 7 SMALL SUBUNIT"/>
    <property type="match status" value="1"/>
</dbReference>
<dbReference type="PANTHER" id="PTHR34137:SF1">
    <property type="entry name" value="EXODEOXYRIBONUCLEASE 7 SMALL SUBUNIT"/>
    <property type="match status" value="1"/>
</dbReference>
<dbReference type="Pfam" id="PF02609">
    <property type="entry name" value="Exonuc_VII_S"/>
    <property type="match status" value="1"/>
</dbReference>
<dbReference type="PIRSF" id="PIRSF006488">
    <property type="entry name" value="Exonuc_VII_S"/>
    <property type="match status" value="1"/>
</dbReference>
<dbReference type="SUPFAM" id="SSF116842">
    <property type="entry name" value="XseB-like"/>
    <property type="match status" value="1"/>
</dbReference>
<organism>
    <name type="scientific">Glaesserella parasuis serovar 5 (strain SH0165)</name>
    <name type="common">Haemophilus parasuis</name>
    <dbReference type="NCBI Taxonomy" id="557723"/>
    <lineage>
        <taxon>Bacteria</taxon>
        <taxon>Pseudomonadati</taxon>
        <taxon>Pseudomonadota</taxon>
        <taxon>Gammaproteobacteria</taxon>
        <taxon>Pasteurellales</taxon>
        <taxon>Pasteurellaceae</taxon>
        <taxon>Glaesserella</taxon>
    </lineage>
</organism>
<accession>B8F4R9</accession>
<sequence>MAKKPTLDFETTLKELEEIVNRLETGDLPLEEALNEFETAVKLVQQGQERLQKAEQRIQILLQKNEHADLTDYP</sequence>
<comment type="function">
    <text evidence="1">Bidirectionally degrades single-stranded DNA into large acid-insoluble oligonucleotides, which are then degraded further into small acid-soluble oligonucleotides.</text>
</comment>
<comment type="catalytic activity">
    <reaction evidence="1">
        <text>Exonucleolytic cleavage in either 5'- to 3'- or 3'- to 5'-direction to yield nucleoside 5'-phosphates.</text>
        <dbReference type="EC" id="3.1.11.6"/>
    </reaction>
</comment>
<comment type="subunit">
    <text evidence="1">Heterooligomer composed of large and small subunits.</text>
</comment>
<comment type="subcellular location">
    <subcellularLocation>
        <location evidence="1">Cytoplasm</location>
    </subcellularLocation>
</comment>
<comment type="similarity">
    <text evidence="1">Belongs to the XseB family.</text>
</comment>
<feature type="chain" id="PRO_1000200254" description="Exodeoxyribonuclease 7 small subunit">
    <location>
        <begin position="1"/>
        <end position="74"/>
    </location>
</feature>
<evidence type="ECO:0000255" key="1">
    <source>
        <dbReference type="HAMAP-Rule" id="MF_00337"/>
    </source>
</evidence>
<proteinExistence type="inferred from homology"/>